<dbReference type="EC" id="1.2.1.12"/>
<dbReference type="EMBL" id="L07501">
    <property type="protein sequence ID" value="AAA33779.1"/>
    <property type="molecule type" value="mRNA"/>
</dbReference>
<dbReference type="PIR" id="T09663">
    <property type="entry name" value="T09663"/>
</dbReference>
<dbReference type="SMR" id="P34924"/>
<dbReference type="SABIO-RK" id="P34924"/>
<dbReference type="UniPathway" id="UPA00109">
    <property type="reaction ID" value="UER00184"/>
</dbReference>
<dbReference type="GO" id="GO:0005829">
    <property type="term" value="C:cytosol"/>
    <property type="evidence" value="ECO:0007669"/>
    <property type="project" value="TreeGrafter"/>
</dbReference>
<dbReference type="GO" id="GO:0004365">
    <property type="term" value="F:glyceraldehyde-3-phosphate dehydrogenase (NAD+) (phosphorylating) activity"/>
    <property type="evidence" value="ECO:0007669"/>
    <property type="project" value="UniProtKB-EC"/>
</dbReference>
<dbReference type="GO" id="GO:0051287">
    <property type="term" value="F:NAD binding"/>
    <property type="evidence" value="ECO:0007669"/>
    <property type="project" value="InterPro"/>
</dbReference>
<dbReference type="GO" id="GO:0050661">
    <property type="term" value="F:NADP binding"/>
    <property type="evidence" value="ECO:0007669"/>
    <property type="project" value="InterPro"/>
</dbReference>
<dbReference type="GO" id="GO:0006006">
    <property type="term" value="P:glucose metabolic process"/>
    <property type="evidence" value="ECO:0007669"/>
    <property type="project" value="InterPro"/>
</dbReference>
<dbReference type="GO" id="GO:0006096">
    <property type="term" value="P:glycolytic process"/>
    <property type="evidence" value="ECO:0007669"/>
    <property type="project" value="UniProtKB-UniPathway"/>
</dbReference>
<dbReference type="CDD" id="cd18126">
    <property type="entry name" value="GAPDH_I_C"/>
    <property type="match status" value="1"/>
</dbReference>
<dbReference type="CDD" id="cd05214">
    <property type="entry name" value="GAPDH_I_N"/>
    <property type="match status" value="1"/>
</dbReference>
<dbReference type="FunFam" id="3.30.360.10:FF:000001">
    <property type="entry name" value="Glyceraldehyde-3-phosphate dehydrogenase"/>
    <property type="match status" value="1"/>
</dbReference>
<dbReference type="FunFam" id="3.40.50.720:FF:000020">
    <property type="entry name" value="Glyceraldehyde-3-phosphate dehydrogenase"/>
    <property type="match status" value="1"/>
</dbReference>
<dbReference type="Gene3D" id="3.30.360.10">
    <property type="entry name" value="Dihydrodipicolinate Reductase, domain 2"/>
    <property type="match status" value="1"/>
</dbReference>
<dbReference type="Gene3D" id="3.40.50.720">
    <property type="entry name" value="NAD(P)-binding Rossmann-like Domain"/>
    <property type="match status" value="1"/>
</dbReference>
<dbReference type="InterPro" id="IPR020831">
    <property type="entry name" value="GlycerAld/Erythrose_P_DH"/>
</dbReference>
<dbReference type="InterPro" id="IPR020830">
    <property type="entry name" value="GlycerAld_3-P_DH_AS"/>
</dbReference>
<dbReference type="InterPro" id="IPR020829">
    <property type="entry name" value="GlycerAld_3-P_DH_cat"/>
</dbReference>
<dbReference type="InterPro" id="IPR020828">
    <property type="entry name" value="GlycerAld_3-P_DH_NAD(P)-bd"/>
</dbReference>
<dbReference type="InterPro" id="IPR006424">
    <property type="entry name" value="Glyceraldehyde-3-P_DH_1"/>
</dbReference>
<dbReference type="InterPro" id="IPR036291">
    <property type="entry name" value="NAD(P)-bd_dom_sf"/>
</dbReference>
<dbReference type="NCBIfam" id="TIGR01534">
    <property type="entry name" value="GAPDH-I"/>
    <property type="match status" value="1"/>
</dbReference>
<dbReference type="PANTHER" id="PTHR10836">
    <property type="entry name" value="GLYCERALDEHYDE 3-PHOSPHATE DEHYDROGENASE"/>
    <property type="match status" value="1"/>
</dbReference>
<dbReference type="PANTHER" id="PTHR10836:SF112">
    <property type="entry name" value="GLYCERALDEHYDE-3-PHOSPHATE DEHYDROGENASE GAPC1, CYTOSOLIC-RELATED"/>
    <property type="match status" value="1"/>
</dbReference>
<dbReference type="Pfam" id="PF02800">
    <property type="entry name" value="Gp_dh_C"/>
    <property type="match status" value="1"/>
</dbReference>
<dbReference type="Pfam" id="PF00044">
    <property type="entry name" value="Gp_dh_N"/>
    <property type="match status" value="1"/>
</dbReference>
<dbReference type="PIRSF" id="PIRSF000149">
    <property type="entry name" value="GAP_DH"/>
    <property type="match status" value="1"/>
</dbReference>
<dbReference type="PRINTS" id="PR00078">
    <property type="entry name" value="G3PDHDRGNASE"/>
</dbReference>
<dbReference type="SMART" id="SM00846">
    <property type="entry name" value="Gp_dh_N"/>
    <property type="match status" value="1"/>
</dbReference>
<dbReference type="SUPFAM" id="SSF55347">
    <property type="entry name" value="Glyceraldehyde-3-phosphate dehydrogenase-like, C-terminal domain"/>
    <property type="match status" value="1"/>
</dbReference>
<dbReference type="SUPFAM" id="SSF51735">
    <property type="entry name" value="NAD(P)-binding Rossmann-fold domains"/>
    <property type="match status" value="1"/>
</dbReference>
<dbReference type="PROSITE" id="PS00071">
    <property type="entry name" value="GAPDH"/>
    <property type="match status" value="1"/>
</dbReference>
<proteinExistence type="evidence at transcript level"/>
<accession>P34924</accession>
<name>G3PC_PINSY</name>
<protein>
    <recommendedName>
        <fullName>Glyceraldehyde-3-phosphate dehydrogenase, cytosolic</fullName>
        <ecNumber>1.2.1.12</ecNumber>
    </recommendedName>
</protein>
<keyword id="KW-0963">Cytoplasm</keyword>
<keyword id="KW-0324">Glycolysis</keyword>
<keyword id="KW-0520">NAD</keyword>
<keyword id="KW-0560">Oxidoreductase</keyword>
<comment type="function">
    <text evidence="1">Key enzyme in glycolysis that catalyzes the first step of the pathway by converting D-glyceraldehyde 3-phosphate (G3P) into 3-phospho-D-glyceroyl phosphate. Essential for the maintenance of cellular ATP levels and carbohydrate metabolism (By similarity).</text>
</comment>
<comment type="catalytic activity">
    <reaction evidence="2">
        <text>D-glyceraldehyde 3-phosphate + phosphate + NAD(+) = (2R)-3-phospho-glyceroyl phosphate + NADH + H(+)</text>
        <dbReference type="Rhea" id="RHEA:10300"/>
        <dbReference type="ChEBI" id="CHEBI:15378"/>
        <dbReference type="ChEBI" id="CHEBI:43474"/>
        <dbReference type="ChEBI" id="CHEBI:57540"/>
        <dbReference type="ChEBI" id="CHEBI:57604"/>
        <dbReference type="ChEBI" id="CHEBI:57945"/>
        <dbReference type="ChEBI" id="CHEBI:59776"/>
        <dbReference type="EC" id="1.2.1.12"/>
    </reaction>
</comment>
<comment type="pathway">
    <text>Carbohydrate degradation; glycolysis; pyruvate from D-glyceraldehyde 3-phosphate: step 1/5.</text>
</comment>
<comment type="subunit">
    <text evidence="1">Homotetramer.</text>
</comment>
<comment type="subcellular location">
    <subcellularLocation>
        <location evidence="1">Cytoplasm</location>
    </subcellularLocation>
</comment>
<comment type="miscellaneous">
    <text>Plants contain two types of GAPDH: cytosolic forms which participate in glycolysis and chloroplast forms which participate in photosynthesis. All the forms are encoded by distinct genes.</text>
</comment>
<comment type="similarity">
    <text evidence="3">Belongs to the glyceraldehyde-3-phosphate dehydrogenase family.</text>
</comment>
<reference key="1">
    <citation type="journal article" date="1993" name="Mol. Biol. Evol.">
        <title>Molecular phylogenies in angiosperm evolution.</title>
        <authorList>
            <person name="Martin W."/>
            <person name="Lydiate D."/>
            <person name="Brinkmann H."/>
            <person name="Forkmann G."/>
            <person name="Saedler H."/>
            <person name="Cerff R."/>
        </authorList>
    </citation>
    <scope>NUCLEOTIDE SEQUENCE [MRNA]</scope>
</reference>
<organism>
    <name type="scientific">Pinus sylvestris</name>
    <name type="common">Scotch pine</name>
    <dbReference type="NCBI Taxonomy" id="3349"/>
    <lineage>
        <taxon>Eukaryota</taxon>
        <taxon>Viridiplantae</taxon>
        <taxon>Streptophyta</taxon>
        <taxon>Embryophyta</taxon>
        <taxon>Tracheophyta</taxon>
        <taxon>Spermatophyta</taxon>
        <taxon>Pinopsida</taxon>
        <taxon>Pinidae</taxon>
        <taxon>Conifers I</taxon>
        <taxon>Pinales</taxon>
        <taxon>Pinaceae</taxon>
        <taxon>Pinus</taxon>
        <taxon>Pinus subgen. Pinus</taxon>
    </lineage>
</organism>
<sequence length="340" mass="36530">MGSTGKIKIGINGFGRIGRLVARVALTRDDIELVGVNDPFISTDYMSYMFKYDSVHGKWKHHEVNVKDSKTLLFGEKSVAVFGCRNPEEIPWGEVGAEYVVESTGVFTDKEKASAHLKAGAKKVVISAPSKDAPMFVVGVNEHQYKSDVNIVSNASCTTNCLAPLAKVINDKFGIVEGLMTTVHSITATQKTVDGPSNKDWRGGRGAGFNIIPSSTGAAKAVGKVLPALNGKLTGMAFRVPTPDVSVVDLTVRLEKSATYDEIKAAIKAESEGNLKGILGYTEDAVVSTDFIGDSRSSIFDAQAGIALSDNFVKLVSWYDNEWGYSSRVVDLIVHMAATQ</sequence>
<feature type="chain" id="PRO_0000145614" description="Glyceraldehyde-3-phosphate dehydrogenase, cytosolic">
    <location>
        <begin position="1"/>
        <end position="340"/>
    </location>
</feature>
<feature type="active site" description="Nucleophile" evidence="2">
    <location>
        <position position="157"/>
    </location>
</feature>
<feature type="binding site" evidence="1">
    <location>
        <begin position="16"/>
        <end position="17"/>
    </location>
    <ligand>
        <name>NAD(+)</name>
        <dbReference type="ChEBI" id="CHEBI:57540"/>
    </ligand>
</feature>
<feature type="binding site" evidence="1">
    <location>
        <position position="38"/>
    </location>
    <ligand>
        <name>NAD(+)</name>
        <dbReference type="ChEBI" id="CHEBI:57540"/>
    </ligand>
</feature>
<feature type="binding site" evidence="1">
    <location>
        <position position="85"/>
    </location>
    <ligand>
        <name>NAD(+)</name>
        <dbReference type="ChEBI" id="CHEBI:57540"/>
    </ligand>
</feature>
<feature type="binding site" evidence="1">
    <location>
        <begin position="156"/>
        <end position="158"/>
    </location>
    <ligand>
        <name>D-glyceraldehyde 3-phosphate</name>
        <dbReference type="ChEBI" id="CHEBI:59776"/>
    </ligand>
</feature>
<feature type="binding site" evidence="1">
    <location>
        <position position="187"/>
    </location>
    <ligand>
        <name>D-glyceraldehyde 3-phosphate</name>
        <dbReference type="ChEBI" id="CHEBI:59776"/>
    </ligand>
</feature>
<feature type="binding site" evidence="1">
    <location>
        <begin position="216"/>
        <end position="217"/>
    </location>
    <ligand>
        <name>D-glyceraldehyde 3-phosphate</name>
        <dbReference type="ChEBI" id="CHEBI:59776"/>
    </ligand>
</feature>
<feature type="binding site" evidence="1">
    <location>
        <position position="239"/>
    </location>
    <ligand>
        <name>D-glyceraldehyde 3-phosphate</name>
        <dbReference type="ChEBI" id="CHEBI:59776"/>
    </ligand>
</feature>
<feature type="binding site" evidence="1">
    <location>
        <position position="321"/>
    </location>
    <ligand>
        <name>NAD(+)</name>
        <dbReference type="ChEBI" id="CHEBI:57540"/>
    </ligand>
</feature>
<feature type="site" description="Activates thiol group during catalysis" evidence="1">
    <location>
        <position position="184"/>
    </location>
</feature>
<gene>
    <name type="primary">GAPC</name>
</gene>
<evidence type="ECO:0000250" key="1"/>
<evidence type="ECO:0000255" key="2">
    <source>
        <dbReference type="PROSITE-ProRule" id="PRU10009"/>
    </source>
</evidence>
<evidence type="ECO:0000305" key="3"/>